<reference key="1">
    <citation type="journal article" date="2005" name="Science">
        <title>The transcriptional landscape of the mammalian genome.</title>
        <authorList>
            <person name="Carninci P."/>
            <person name="Kasukawa T."/>
            <person name="Katayama S."/>
            <person name="Gough J."/>
            <person name="Frith M.C."/>
            <person name="Maeda N."/>
            <person name="Oyama R."/>
            <person name="Ravasi T."/>
            <person name="Lenhard B."/>
            <person name="Wells C."/>
            <person name="Kodzius R."/>
            <person name="Shimokawa K."/>
            <person name="Bajic V.B."/>
            <person name="Brenner S.E."/>
            <person name="Batalov S."/>
            <person name="Forrest A.R."/>
            <person name="Zavolan M."/>
            <person name="Davis M.J."/>
            <person name="Wilming L.G."/>
            <person name="Aidinis V."/>
            <person name="Allen J.E."/>
            <person name="Ambesi-Impiombato A."/>
            <person name="Apweiler R."/>
            <person name="Aturaliya R.N."/>
            <person name="Bailey T.L."/>
            <person name="Bansal M."/>
            <person name="Baxter L."/>
            <person name="Beisel K.W."/>
            <person name="Bersano T."/>
            <person name="Bono H."/>
            <person name="Chalk A.M."/>
            <person name="Chiu K.P."/>
            <person name="Choudhary V."/>
            <person name="Christoffels A."/>
            <person name="Clutterbuck D.R."/>
            <person name="Crowe M.L."/>
            <person name="Dalla E."/>
            <person name="Dalrymple B.P."/>
            <person name="de Bono B."/>
            <person name="Della Gatta G."/>
            <person name="di Bernardo D."/>
            <person name="Down T."/>
            <person name="Engstrom P."/>
            <person name="Fagiolini M."/>
            <person name="Faulkner G."/>
            <person name="Fletcher C.F."/>
            <person name="Fukushima T."/>
            <person name="Furuno M."/>
            <person name="Futaki S."/>
            <person name="Gariboldi M."/>
            <person name="Georgii-Hemming P."/>
            <person name="Gingeras T.R."/>
            <person name="Gojobori T."/>
            <person name="Green R.E."/>
            <person name="Gustincich S."/>
            <person name="Harbers M."/>
            <person name="Hayashi Y."/>
            <person name="Hensch T.K."/>
            <person name="Hirokawa N."/>
            <person name="Hill D."/>
            <person name="Huminiecki L."/>
            <person name="Iacono M."/>
            <person name="Ikeo K."/>
            <person name="Iwama A."/>
            <person name="Ishikawa T."/>
            <person name="Jakt M."/>
            <person name="Kanapin A."/>
            <person name="Katoh M."/>
            <person name="Kawasawa Y."/>
            <person name="Kelso J."/>
            <person name="Kitamura H."/>
            <person name="Kitano H."/>
            <person name="Kollias G."/>
            <person name="Krishnan S.P."/>
            <person name="Kruger A."/>
            <person name="Kummerfeld S.K."/>
            <person name="Kurochkin I.V."/>
            <person name="Lareau L.F."/>
            <person name="Lazarevic D."/>
            <person name="Lipovich L."/>
            <person name="Liu J."/>
            <person name="Liuni S."/>
            <person name="McWilliam S."/>
            <person name="Madan Babu M."/>
            <person name="Madera M."/>
            <person name="Marchionni L."/>
            <person name="Matsuda H."/>
            <person name="Matsuzawa S."/>
            <person name="Miki H."/>
            <person name="Mignone F."/>
            <person name="Miyake S."/>
            <person name="Morris K."/>
            <person name="Mottagui-Tabar S."/>
            <person name="Mulder N."/>
            <person name="Nakano N."/>
            <person name="Nakauchi H."/>
            <person name="Ng P."/>
            <person name="Nilsson R."/>
            <person name="Nishiguchi S."/>
            <person name="Nishikawa S."/>
            <person name="Nori F."/>
            <person name="Ohara O."/>
            <person name="Okazaki Y."/>
            <person name="Orlando V."/>
            <person name="Pang K.C."/>
            <person name="Pavan W.J."/>
            <person name="Pavesi G."/>
            <person name="Pesole G."/>
            <person name="Petrovsky N."/>
            <person name="Piazza S."/>
            <person name="Reed J."/>
            <person name="Reid J.F."/>
            <person name="Ring B.Z."/>
            <person name="Ringwald M."/>
            <person name="Rost B."/>
            <person name="Ruan Y."/>
            <person name="Salzberg S.L."/>
            <person name="Sandelin A."/>
            <person name="Schneider C."/>
            <person name="Schoenbach C."/>
            <person name="Sekiguchi K."/>
            <person name="Semple C.A."/>
            <person name="Seno S."/>
            <person name="Sessa L."/>
            <person name="Sheng Y."/>
            <person name="Shibata Y."/>
            <person name="Shimada H."/>
            <person name="Shimada K."/>
            <person name="Silva D."/>
            <person name="Sinclair B."/>
            <person name="Sperling S."/>
            <person name="Stupka E."/>
            <person name="Sugiura K."/>
            <person name="Sultana R."/>
            <person name="Takenaka Y."/>
            <person name="Taki K."/>
            <person name="Tammoja K."/>
            <person name="Tan S.L."/>
            <person name="Tang S."/>
            <person name="Taylor M.S."/>
            <person name="Tegner J."/>
            <person name="Teichmann S.A."/>
            <person name="Ueda H.R."/>
            <person name="van Nimwegen E."/>
            <person name="Verardo R."/>
            <person name="Wei C.L."/>
            <person name="Yagi K."/>
            <person name="Yamanishi H."/>
            <person name="Zabarovsky E."/>
            <person name="Zhu S."/>
            <person name="Zimmer A."/>
            <person name="Hide W."/>
            <person name="Bult C."/>
            <person name="Grimmond S.M."/>
            <person name="Teasdale R.D."/>
            <person name="Liu E.T."/>
            <person name="Brusic V."/>
            <person name="Quackenbush J."/>
            <person name="Wahlestedt C."/>
            <person name="Mattick J.S."/>
            <person name="Hume D.A."/>
            <person name="Kai C."/>
            <person name="Sasaki D."/>
            <person name="Tomaru Y."/>
            <person name="Fukuda S."/>
            <person name="Kanamori-Katayama M."/>
            <person name="Suzuki M."/>
            <person name="Aoki J."/>
            <person name="Arakawa T."/>
            <person name="Iida J."/>
            <person name="Imamura K."/>
            <person name="Itoh M."/>
            <person name="Kato T."/>
            <person name="Kawaji H."/>
            <person name="Kawagashira N."/>
            <person name="Kawashima T."/>
            <person name="Kojima M."/>
            <person name="Kondo S."/>
            <person name="Konno H."/>
            <person name="Nakano K."/>
            <person name="Ninomiya N."/>
            <person name="Nishio T."/>
            <person name="Okada M."/>
            <person name="Plessy C."/>
            <person name="Shibata K."/>
            <person name="Shiraki T."/>
            <person name="Suzuki S."/>
            <person name="Tagami M."/>
            <person name="Waki K."/>
            <person name="Watahiki A."/>
            <person name="Okamura-Oho Y."/>
            <person name="Suzuki H."/>
            <person name="Kawai J."/>
            <person name="Hayashizaki Y."/>
        </authorList>
    </citation>
    <scope>NUCLEOTIDE SEQUENCE [LARGE SCALE MRNA]</scope>
    <source>
        <strain>C57BL/6J</strain>
        <tissue>Testis</tissue>
    </source>
</reference>
<reference key="2">
    <citation type="journal article" date="2004" name="Genome Res.">
        <title>The status, quality, and expansion of the NIH full-length cDNA project: the Mammalian Gene Collection (MGC).</title>
        <authorList>
            <consortium name="The MGC Project Team"/>
        </authorList>
    </citation>
    <scope>NUCLEOTIDE SEQUENCE [LARGE SCALE MRNA]</scope>
    <source>
        <strain>C57BL/6J</strain>
        <tissue>Egg</tissue>
    </source>
</reference>
<evidence type="ECO:0000255" key="1">
    <source>
        <dbReference type="PROSITE-ProRule" id="PRU00042"/>
    </source>
</evidence>
<evidence type="ECO:0000255" key="2">
    <source>
        <dbReference type="PROSITE-ProRule" id="PRU00119"/>
    </source>
</evidence>
<evidence type="ECO:0000256" key="3">
    <source>
        <dbReference type="SAM" id="MobiDB-lite"/>
    </source>
</evidence>
<evidence type="ECO:0000305" key="4"/>
<evidence type="ECO:0000312" key="5">
    <source>
        <dbReference type="MGI" id="MGI:1919430"/>
    </source>
</evidence>
<proteinExistence type="evidence at transcript level"/>
<name>ZNF2_MOUSE</name>
<accession>Q8BIQ3</accession>
<accession>Q7TPW3</accession>
<sequence length="427" mass="48640">MAAVSPPTRCQALVTFEDVAVTFTDDEWKRLVPVQRALYKAVMLENYESIISLGLPVPRPDVILQFKRRGEPWIRGFHGSEEKTWPESVSLDLETKPETLDASRGTLREIHRKQSSLCPKREIQTLTGGPEPEKESPKARTCKKPLSLDKGLHQMSAPSKKALTKHQDQECSECGKTFFDHSSLIRHQRTHTGEKPYDCPECGKAFSHRSSLSRHLMFHTGESPYECDACGKAFFDRSSLTVHQRIHTGEKPFKCNDCGKAFFDRSSLTRHQRIHTGESPYECQQCGKAFSQKSILTRHLLTHTGRKPYECRDCGKAFYGVTSLNRHQKVHTEEPRYQCSECGKAFFDRSSLTQHQKIHTGDKPYECGECGKAFSQRCRLTRHQRVHTGEKPFECSVCGKEFSSKSSIIQHQRRYAKQGIDRGGSMS</sequence>
<gene>
    <name evidence="5" type="primary">Znf2</name>
    <name type="synonym">Zfp661</name>
</gene>
<dbReference type="EMBL" id="AK033122">
    <property type="protein sequence ID" value="BAC28161.1"/>
    <property type="molecule type" value="mRNA"/>
</dbReference>
<dbReference type="EMBL" id="BC052876">
    <property type="protein sequence ID" value="AAH52876.1"/>
    <property type="molecule type" value="mRNA"/>
</dbReference>
<dbReference type="CCDS" id="CCDS16705.1"/>
<dbReference type="RefSeq" id="NP_001104499.1">
    <property type="nucleotide sequence ID" value="NM_001111029.1"/>
</dbReference>
<dbReference type="RefSeq" id="NP_082417.3">
    <property type="nucleotide sequence ID" value="NM_028141.3"/>
</dbReference>
<dbReference type="RefSeq" id="XP_006500290.1">
    <property type="nucleotide sequence ID" value="XM_006500227.2"/>
</dbReference>
<dbReference type="RefSeq" id="XP_011238090.1">
    <property type="nucleotide sequence ID" value="XM_011239788.2"/>
</dbReference>
<dbReference type="SMR" id="Q8BIQ3"/>
<dbReference type="BioGRID" id="215203">
    <property type="interactions" value="1"/>
</dbReference>
<dbReference type="FunCoup" id="Q8BIQ3">
    <property type="interactions" value="1"/>
</dbReference>
<dbReference type="STRING" id="10090.ENSMUSP00000105995"/>
<dbReference type="iPTMnet" id="Q8BIQ3"/>
<dbReference type="PhosphoSitePlus" id="Q8BIQ3"/>
<dbReference type="jPOST" id="Q8BIQ3"/>
<dbReference type="PaxDb" id="10090-ENSMUSP00000105995"/>
<dbReference type="Antibodypedia" id="72445">
    <property type="antibodies" value="146 antibodies from 22 providers"/>
</dbReference>
<dbReference type="DNASU" id="72180"/>
<dbReference type="Ensembl" id="ENSMUST00000077422.12">
    <property type="protein sequence ID" value="ENSMUSP00000076637.6"/>
    <property type="gene ID" value="ENSMUSG00000034800.16"/>
</dbReference>
<dbReference type="Ensembl" id="ENSMUST00000110366.8">
    <property type="protein sequence ID" value="ENSMUSP00000105995.2"/>
    <property type="gene ID" value="ENSMUSG00000034800.16"/>
</dbReference>
<dbReference type="Ensembl" id="ENSMUST00000110368.9">
    <property type="protein sequence ID" value="ENSMUSP00000105997.3"/>
    <property type="gene ID" value="ENSMUSG00000034800.16"/>
</dbReference>
<dbReference type="Ensembl" id="ENSMUST00000164551.2">
    <property type="protein sequence ID" value="ENSMUSP00000132820.2"/>
    <property type="gene ID" value="ENSMUSG00000034800.16"/>
</dbReference>
<dbReference type="GeneID" id="72180"/>
<dbReference type="KEGG" id="mmu:72180"/>
<dbReference type="UCSC" id="uc008mfq.2">
    <property type="organism name" value="mouse"/>
</dbReference>
<dbReference type="AGR" id="MGI:1919430"/>
<dbReference type="CTD" id="72180"/>
<dbReference type="MGI" id="MGI:1919430">
    <property type="gene designation" value="Zfp661"/>
</dbReference>
<dbReference type="VEuPathDB" id="HostDB:ENSMUSG00000034800"/>
<dbReference type="eggNOG" id="KOG1721">
    <property type="taxonomic scope" value="Eukaryota"/>
</dbReference>
<dbReference type="GeneTree" id="ENSGT00940000160826"/>
<dbReference type="HOGENOM" id="CLU_002678_0_7_1"/>
<dbReference type="InParanoid" id="Q8BIQ3"/>
<dbReference type="OMA" id="TKERGHE"/>
<dbReference type="OrthoDB" id="6077919at2759"/>
<dbReference type="PhylomeDB" id="Q8BIQ3"/>
<dbReference type="TreeFam" id="TF340946"/>
<dbReference type="Reactome" id="R-MMU-212436">
    <property type="pathway name" value="Generic Transcription Pathway"/>
</dbReference>
<dbReference type="BioGRID-ORCS" id="72180">
    <property type="hits" value="2 hits in 76 CRISPR screens"/>
</dbReference>
<dbReference type="PRO" id="PR:Q8BIQ3"/>
<dbReference type="Proteomes" id="UP000000589">
    <property type="component" value="Chromosome 2"/>
</dbReference>
<dbReference type="RNAct" id="Q8BIQ3">
    <property type="molecule type" value="protein"/>
</dbReference>
<dbReference type="Bgee" id="ENSMUSG00000034800">
    <property type="expression patterns" value="Expressed in ureteric bud trunk and 158 other cell types or tissues"/>
</dbReference>
<dbReference type="GO" id="GO:0005634">
    <property type="term" value="C:nucleus"/>
    <property type="evidence" value="ECO:0007669"/>
    <property type="project" value="UniProtKB-SubCell"/>
</dbReference>
<dbReference type="GO" id="GO:0003677">
    <property type="term" value="F:DNA binding"/>
    <property type="evidence" value="ECO:0007669"/>
    <property type="project" value="UniProtKB-KW"/>
</dbReference>
<dbReference type="GO" id="GO:0008270">
    <property type="term" value="F:zinc ion binding"/>
    <property type="evidence" value="ECO:0007669"/>
    <property type="project" value="UniProtKB-KW"/>
</dbReference>
<dbReference type="GO" id="GO:0006355">
    <property type="term" value="P:regulation of DNA-templated transcription"/>
    <property type="evidence" value="ECO:0007669"/>
    <property type="project" value="InterPro"/>
</dbReference>
<dbReference type="CDD" id="cd07765">
    <property type="entry name" value="KRAB_A-box"/>
    <property type="match status" value="1"/>
</dbReference>
<dbReference type="FunFam" id="3.30.160.60:FF:001677">
    <property type="entry name" value="Zinc finger protein 2"/>
    <property type="match status" value="1"/>
</dbReference>
<dbReference type="FunFam" id="3.30.160.60:FF:000380">
    <property type="entry name" value="zinc finger protein 2 isoform X2"/>
    <property type="match status" value="1"/>
</dbReference>
<dbReference type="FunFam" id="3.30.160.60:FF:000586">
    <property type="entry name" value="zinc finger protein 2 isoform X2"/>
    <property type="match status" value="1"/>
</dbReference>
<dbReference type="FunFam" id="3.30.160.60:FF:000794">
    <property type="entry name" value="zinc finger protein 2 isoform X2"/>
    <property type="match status" value="2"/>
</dbReference>
<dbReference type="FunFam" id="3.30.160.60:FF:000947">
    <property type="entry name" value="zinc finger protein 2 isoform X2"/>
    <property type="match status" value="1"/>
</dbReference>
<dbReference type="FunFam" id="3.30.160.60:FF:002090">
    <property type="entry name" value="Zinc finger protein 473"/>
    <property type="match status" value="1"/>
</dbReference>
<dbReference type="FunFam" id="3.30.160.60:FF:000564">
    <property type="entry name" value="zinc finger protein 699"/>
    <property type="match status" value="1"/>
</dbReference>
<dbReference type="FunFam" id="3.30.160.60:FF:001134">
    <property type="entry name" value="Zinc finger protein 70"/>
    <property type="match status" value="1"/>
</dbReference>
<dbReference type="Gene3D" id="6.10.140.140">
    <property type="match status" value="1"/>
</dbReference>
<dbReference type="Gene3D" id="3.30.160.60">
    <property type="entry name" value="Classic Zinc Finger"/>
    <property type="match status" value="9"/>
</dbReference>
<dbReference type="InterPro" id="IPR001909">
    <property type="entry name" value="KRAB"/>
</dbReference>
<dbReference type="InterPro" id="IPR036051">
    <property type="entry name" value="KRAB_dom_sf"/>
</dbReference>
<dbReference type="InterPro" id="IPR050758">
    <property type="entry name" value="Znf_C2H2-type"/>
</dbReference>
<dbReference type="InterPro" id="IPR036236">
    <property type="entry name" value="Znf_C2H2_sf"/>
</dbReference>
<dbReference type="InterPro" id="IPR013087">
    <property type="entry name" value="Znf_C2H2_type"/>
</dbReference>
<dbReference type="PANTHER" id="PTHR23234:SF10">
    <property type="entry name" value="RIKEN CDNA 6720489N17 GENE-RELATED"/>
    <property type="match status" value="1"/>
</dbReference>
<dbReference type="PANTHER" id="PTHR23234">
    <property type="entry name" value="ZNF44 PROTEIN"/>
    <property type="match status" value="1"/>
</dbReference>
<dbReference type="Pfam" id="PF01352">
    <property type="entry name" value="KRAB"/>
    <property type="match status" value="1"/>
</dbReference>
<dbReference type="Pfam" id="PF00096">
    <property type="entry name" value="zf-C2H2"/>
    <property type="match status" value="7"/>
</dbReference>
<dbReference type="Pfam" id="PF13465">
    <property type="entry name" value="zf-H2C2_2"/>
    <property type="match status" value="1"/>
</dbReference>
<dbReference type="SMART" id="SM00349">
    <property type="entry name" value="KRAB"/>
    <property type="match status" value="1"/>
</dbReference>
<dbReference type="SMART" id="SM00355">
    <property type="entry name" value="ZnF_C2H2"/>
    <property type="match status" value="9"/>
</dbReference>
<dbReference type="SUPFAM" id="SSF57667">
    <property type="entry name" value="beta-beta-alpha zinc fingers"/>
    <property type="match status" value="5"/>
</dbReference>
<dbReference type="SUPFAM" id="SSF109640">
    <property type="entry name" value="KRAB domain (Kruppel-associated box)"/>
    <property type="match status" value="1"/>
</dbReference>
<dbReference type="PROSITE" id="PS50805">
    <property type="entry name" value="KRAB"/>
    <property type="match status" value="1"/>
</dbReference>
<dbReference type="PROSITE" id="PS00028">
    <property type="entry name" value="ZINC_FINGER_C2H2_1"/>
    <property type="match status" value="8"/>
</dbReference>
<dbReference type="PROSITE" id="PS50157">
    <property type="entry name" value="ZINC_FINGER_C2H2_2"/>
    <property type="match status" value="9"/>
</dbReference>
<protein>
    <recommendedName>
        <fullName evidence="4">Zinc finger protein 2</fullName>
    </recommendedName>
    <alternativeName>
        <fullName>Zinc finger protein 661</fullName>
        <shortName>Zfp-661</shortName>
    </alternativeName>
</protein>
<feature type="chain" id="PRO_0000274050" description="Zinc finger protein 2">
    <location>
        <begin position="1"/>
        <end position="427"/>
    </location>
</feature>
<feature type="domain" description="KRAB" evidence="2">
    <location>
        <begin position="14"/>
        <end position="85"/>
    </location>
</feature>
<feature type="zinc finger region" description="C2H2-type 1" evidence="1">
    <location>
        <begin position="169"/>
        <end position="191"/>
    </location>
</feature>
<feature type="zinc finger region" description="C2H2-type 2" evidence="1">
    <location>
        <begin position="197"/>
        <end position="219"/>
    </location>
</feature>
<feature type="zinc finger region" description="C2H2-type 3" evidence="1">
    <location>
        <begin position="225"/>
        <end position="247"/>
    </location>
</feature>
<feature type="zinc finger region" description="C2H2-type 4" evidence="1">
    <location>
        <begin position="253"/>
        <end position="275"/>
    </location>
</feature>
<feature type="zinc finger region" description="C2H2-type 5" evidence="1">
    <location>
        <begin position="281"/>
        <end position="303"/>
    </location>
</feature>
<feature type="zinc finger region" description="C2H2-type 6" evidence="1">
    <location>
        <begin position="309"/>
        <end position="331"/>
    </location>
</feature>
<feature type="zinc finger region" description="C2H2-type 7" evidence="1">
    <location>
        <begin position="337"/>
        <end position="359"/>
    </location>
</feature>
<feature type="zinc finger region" description="C2H2-type 8" evidence="1">
    <location>
        <begin position="365"/>
        <end position="387"/>
    </location>
</feature>
<feature type="zinc finger region" description="C2H2-type 9; degenerate" evidence="1">
    <location>
        <begin position="393"/>
        <end position="415"/>
    </location>
</feature>
<feature type="region of interest" description="Disordered" evidence="3">
    <location>
        <begin position="111"/>
        <end position="142"/>
    </location>
</feature>
<feature type="sequence conflict" description="In Ref. 2; AAH52876." evidence="4" ref="2">
    <original>V</original>
    <variation>A</variation>
    <location>
        <position position="62"/>
    </location>
</feature>
<feature type="sequence conflict" description="In Ref. 2; AAH52876." evidence="4" ref="2">
    <original>T</original>
    <variation>A</variation>
    <location>
        <position position="95"/>
    </location>
</feature>
<feature type="sequence conflict" description="In Ref. 2; AAH52876." evidence="4" ref="2">
    <original>G</original>
    <variation>E</variation>
    <location>
        <position position="249"/>
    </location>
</feature>
<comment type="function">
    <text>May be involved in transcriptional regulation.</text>
</comment>
<comment type="subcellular location">
    <subcellularLocation>
        <location evidence="4">Nucleus</location>
    </subcellularLocation>
</comment>
<comment type="similarity">
    <text evidence="4">Belongs to the krueppel C2H2-type zinc-finger protein family.</text>
</comment>
<keyword id="KW-0238">DNA-binding</keyword>
<keyword id="KW-0479">Metal-binding</keyword>
<keyword id="KW-0539">Nucleus</keyword>
<keyword id="KW-1185">Reference proteome</keyword>
<keyword id="KW-0677">Repeat</keyword>
<keyword id="KW-0804">Transcription</keyword>
<keyword id="KW-0805">Transcription regulation</keyword>
<keyword id="KW-0862">Zinc</keyword>
<keyword id="KW-0863">Zinc-finger</keyword>
<organism>
    <name type="scientific">Mus musculus</name>
    <name type="common">Mouse</name>
    <dbReference type="NCBI Taxonomy" id="10090"/>
    <lineage>
        <taxon>Eukaryota</taxon>
        <taxon>Metazoa</taxon>
        <taxon>Chordata</taxon>
        <taxon>Craniata</taxon>
        <taxon>Vertebrata</taxon>
        <taxon>Euteleostomi</taxon>
        <taxon>Mammalia</taxon>
        <taxon>Eutheria</taxon>
        <taxon>Euarchontoglires</taxon>
        <taxon>Glires</taxon>
        <taxon>Rodentia</taxon>
        <taxon>Myomorpha</taxon>
        <taxon>Muroidea</taxon>
        <taxon>Muridae</taxon>
        <taxon>Murinae</taxon>
        <taxon>Mus</taxon>
        <taxon>Mus</taxon>
    </lineage>
</organism>